<comment type="function">
    <text evidence="2">GTP hydrolase that promotes the GTP-dependent binding of aminoacyl-tRNA to the A-site of ribosomes during protein biosynthesis.</text>
</comment>
<comment type="catalytic activity">
    <reaction evidence="2">
        <text>GTP + H2O = GDP + phosphate + H(+)</text>
        <dbReference type="Rhea" id="RHEA:19669"/>
        <dbReference type="ChEBI" id="CHEBI:15377"/>
        <dbReference type="ChEBI" id="CHEBI:15378"/>
        <dbReference type="ChEBI" id="CHEBI:37565"/>
        <dbReference type="ChEBI" id="CHEBI:43474"/>
        <dbReference type="ChEBI" id="CHEBI:58189"/>
        <dbReference type="EC" id="3.6.5.3"/>
    </reaction>
    <physiologicalReaction direction="left-to-right" evidence="2">
        <dbReference type="Rhea" id="RHEA:19670"/>
    </physiologicalReaction>
</comment>
<comment type="subunit">
    <text evidence="2">Monomer.</text>
</comment>
<comment type="subcellular location">
    <subcellularLocation>
        <location evidence="2">Cytoplasm</location>
    </subcellularLocation>
</comment>
<comment type="similarity">
    <text evidence="2">Belongs to the TRAFAC class translation factor GTPase superfamily. Classic translation factor GTPase family. EF-Tu/EF-1A subfamily.</text>
</comment>
<organism>
    <name type="scientific">Synechococcus sp. (strain CC9311)</name>
    <dbReference type="NCBI Taxonomy" id="64471"/>
    <lineage>
        <taxon>Bacteria</taxon>
        <taxon>Bacillati</taxon>
        <taxon>Cyanobacteriota</taxon>
        <taxon>Cyanophyceae</taxon>
        <taxon>Synechococcales</taxon>
        <taxon>Synechococcaceae</taxon>
        <taxon>Synechococcus</taxon>
    </lineage>
</organism>
<keyword id="KW-0963">Cytoplasm</keyword>
<keyword id="KW-0251">Elongation factor</keyword>
<keyword id="KW-0342">GTP-binding</keyword>
<keyword id="KW-0378">Hydrolase</keyword>
<keyword id="KW-0460">Magnesium</keyword>
<keyword id="KW-0479">Metal-binding</keyword>
<keyword id="KW-0547">Nucleotide-binding</keyword>
<keyword id="KW-0648">Protein biosynthesis</keyword>
<keyword id="KW-1185">Reference proteome</keyword>
<gene>
    <name evidence="2" type="primary">tuf</name>
    <name type="ordered locus">sync_0381</name>
</gene>
<name>EFTU_SYNS3</name>
<proteinExistence type="inferred from homology"/>
<feature type="chain" id="PRO_1000015773" description="Elongation factor Tu">
    <location>
        <begin position="1"/>
        <end position="399"/>
    </location>
</feature>
<feature type="domain" description="tr-type G">
    <location>
        <begin position="10"/>
        <end position="204"/>
    </location>
</feature>
<feature type="region of interest" description="G1" evidence="1">
    <location>
        <begin position="19"/>
        <end position="26"/>
    </location>
</feature>
<feature type="region of interest" description="G2" evidence="1">
    <location>
        <begin position="60"/>
        <end position="64"/>
    </location>
</feature>
<feature type="region of interest" description="G3" evidence="1">
    <location>
        <begin position="81"/>
        <end position="84"/>
    </location>
</feature>
<feature type="region of interest" description="G4" evidence="1">
    <location>
        <begin position="136"/>
        <end position="139"/>
    </location>
</feature>
<feature type="region of interest" description="G5" evidence="1">
    <location>
        <begin position="174"/>
        <end position="176"/>
    </location>
</feature>
<feature type="binding site" evidence="2">
    <location>
        <begin position="19"/>
        <end position="26"/>
    </location>
    <ligand>
        <name>GTP</name>
        <dbReference type="ChEBI" id="CHEBI:37565"/>
    </ligand>
</feature>
<feature type="binding site" evidence="2">
    <location>
        <position position="26"/>
    </location>
    <ligand>
        <name>Mg(2+)</name>
        <dbReference type="ChEBI" id="CHEBI:18420"/>
    </ligand>
</feature>
<feature type="binding site" evidence="2">
    <location>
        <begin position="81"/>
        <end position="85"/>
    </location>
    <ligand>
        <name>GTP</name>
        <dbReference type="ChEBI" id="CHEBI:37565"/>
    </ligand>
</feature>
<feature type="binding site" evidence="2">
    <location>
        <begin position="136"/>
        <end position="139"/>
    </location>
    <ligand>
        <name>GTP</name>
        <dbReference type="ChEBI" id="CHEBI:37565"/>
    </ligand>
</feature>
<reference key="1">
    <citation type="journal article" date="2006" name="Proc. Natl. Acad. Sci. U.S.A.">
        <title>Genome sequence of Synechococcus CC9311: insights into adaptation to a coastal environment.</title>
        <authorList>
            <person name="Palenik B."/>
            <person name="Ren Q."/>
            <person name="Dupont C.L."/>
            <person name="Myers G.S."/>
            <person name="Heidelberg J.F."/>
            <person name="Badger J.H."/>
            <person name="Madupu R."/>
            <person name="Nelson W.C."/>
            <person name="Brinkac L.M."/>
            <person name="Dodson R.J."/>
            <person name="Durkin A.S."/>
            <person name="Daugherty S.C."/>
            <person name="Sullivan S.A."/>
            <person name="Khouri H."/>
            <person name="Mohamoud Y."/>
            <person name="Halpin R."/>
            <person name="Paulsen I.T."/>
        </authorList>
    </citation>
    <scope>NUCLEOTIDE SEQUENCE [LARGE SCALE GENOMIC DNA]</scope>
    <source>
        <strain>CC9311</strain>
    </source>
</reference>
<evidence type="ECO:0000250" key="1"/>
<evidence type="ECO:0000255" key="2">
    <source>
        <dbReference type="HAMAP-Rule" id="MF_00118"/>
    </source>
</evidence>
<accession>Q0ID59</accession>
<protein>
    <recommendedName>
        <fullName evidence="2">Elongation factor Tu</fullName>
        <shortName evidence="2">EF-Tu</shortName>
        <ecNumber evidence="2">3.6.5.3</ecNumber>
    </recommendedName>
</protein>
<dbReference type="EC" id="3.6.5.3" evidence="2"/>
<dbReference type="EMBL" id="CP000435">
    <property type="protein sequence ID" value="ABI47605.1"/>
    <property type="molecule type" value="Genomic_DNA"/>
</dbReference>
<dbReference type="RefSeq" id="WP_011618352.1">
    <property type="nucleotide sequence ID" value="NC_008319.1"/>
</dbReference>
<dbReference type="SMR" id="Q0ID59"/>
<dbReference type="STRING" id="64471.sync_0381"/>
<dbReference type="KEGG" id="syg:sync_0381"/>
<dbReference type="eggNOG" id="COG0050">
    <property type="taxonomic scope" value="Bacteria"/>
</dbReference>
<dbReference type="HOGENOM" id="CLU_007265_0_1_3"/>
<dbReference type="OrthoDB" id="9804504at2"/>
<dbReference type="Proteomes" id="UP000001961">
    <property type="component" value="Chromosome"/>
</dbReference>
<dbReference type="GO" id="GO:0005829">
    <property type="term" value="C:cytosol"/>
    <property type="evidence" value="ECO:0007669"/>
    <property type="project" value="TreeGrafter"/>
</dbReference>
<dbReference type="GO" id="GO:0005525">
    <property type="term" value="F:GTP binding"/>
    <property type="evidence" value="ECO:0007669"/>
    <property type="project" value="UniProtKB-UniRule"/>
</dbReference>
<dbReference type="GO" id="GO:0003924">
    <property type="term" value="F:GTPase activity"/>
    <property type="evidence" value="ECO:0007669"/>
    <property type="project" value="InterPro"/>
</dbReference>
<dbReference type="GO" id="GO:0003746">
    <property type="term" value="F:translation elongation factor activity"/>
    <property type="evidence" value="ECO:0007669"/>
    <property type="project" value="UniProtKB-UniRule"/>
</dbReference>
<dbReference type="CDD" id="cd01884">
    <property type="entry name" value="EF_Tu"/>
    <property type="match status" value="1"/>
</dbReference>
<dbReference type="CDD" id="cd03697">
    <property type="entry name" value="EFTU_II"/>
    <property type="match status" value="1"/>
</dbReference>
<dbReference type="CDD" id="cd03707">
    <property type="entry name" value="EFTU_III"/>
    <property type="match status" value="1"/>
</dbReference>
<dbReference type="FunFam" id="2.40.30.10:FF:000001">
    <property type="entry name" value="Elongation factor Tu"/>
    <property type="match status" value="1"/>
</dbReference>
<dbReference type="FunFam" id="3.40.50.300:FF:000003">
    <property type="entry name" value="Elongation factor Tu"/>
    <property type="match status" value="1"/>
</dbReference>
<dbReference type="Gene3D" id="3.40.50.300">
    <property type="entry name" value="P-loop containing nucleotide triphosphate hydrolases"/>
    <property type="match status" value="1"/>
</dbReference>
<dbReference type="Gene3D" id="2.40.30.10">
    <property type="entry name" value="Translation factors"/>
    <property type="match status" value="2"/>
</dbReference>
<dbReference type="HAMAP" id="MF_00118_B">
    <property type="entry name" value="EF_Tu_B"/>
    <property type="match status" value="1"/>
</dbReference>
<dbReference type="InterPro" id="IPR041709">
    <property type="entry name" value="EF-Tu_GTP-bd"/>
</dbReference>
<dbReference type="InterPro" id="IPR050055">
    <property type="entry name" value="EF-Tu_GTPase"/>
</dbReference>
<dbReference type="InterPro" id="IPR004161">
    <property type="entry name" value="EFTu-like_2"/>
</dbReference>
<dbReference type="InterPro" id="IPR033720">
    <property type="entry name" value="EFTU_2"/>
</dbReference>
<dbReference type="InterPro" id="IPR031157">
    <property type="entry name" value="G_TR_CS"/>
</dbReference>
<dbReference type="InterPro" id="IPR027417">
    <property type="entry name" value="P-loop_NTPase"/>
</dbReference>
<dbReference type="InterPro" id="IPR005225">
    <property type="entry name" value="Small_GTP-bd"/>
</dbReference>
<dbReference type="InterPro" id="IPR000795">
    <property type="entry name" value="T_Tr_GTP-bd_dom"/>
</dbReference>
<dbReference type="InterPro" id="IPR009000">
    <property type="entry name" value="Transl_B-barrel_sf"/>
</dbReference>
<dbReference type="InterPro" id="IPR009001">
    <property type="entry name" value="Transl_elong_EF1A/Init_IF2_C"/>
</dbReference>
<dbReference type="InterPro" id="IPR004541">
    <property type="entry name" value="Transl_elong_EFTu/EF1A_bac/org"/>
</dbReference>
<dbReference type="InterPro" id="IPR004160">
    <property type="entry name" value="Transl_elong_EFTu/EF1A_C"/>
</dbReference>
<dbReference type="NCBIfam" id="TIGR00485">
    <property type="entry name" value="EF-Tu"/>
    <property type="match status" value="1"/>
</dbReference>
<dbReference type="NCBIfam" id="NF000766">
    <property type="entry name" value="PRK00049.1"/>
    <property type="match status" value="1"/>
</dbReference>
<dbReference type="NCBIfam" id="NF009372">
    <property type="entry name" value="PRK12735.1"/>
    <property type="match status" value="1"/>
</dbReference>
<dbReference type="NCBIfam" id="NF009373">
    <property type="entry name" value="PRK12736.1"/>
    <property type="match status" value="1"/>
</dbReference>
<dbReference type="NCBIfam" id="TIGR00231">
    <property type="entry name" value="small_GTP"/>
    <property type="match status" value="1"/>
</dbReference>
<dbReference type="PANTHER" id="PTHR43721:SF22">
    <property type="entry name" value="ELONGATION FACTOR TU, MITOCHONDRIAL"/>
    <property type="match status" value="1"/>
</dbReference>
<dbReference type="PANTHER" id="PTHR43721">
    <property type="entry name" value="ELONGATION FACTOR TU-RELATED"/>
    <property type="match status" value="1"/>
</dbReference>
<dbReference type="Pfam" id="PF00009">
    <property type="entry name" value="GTP_EFTU"/>
    <property type="match status" value="1"/>
</dbReference>
<dbReference type="Pfam" id="PF03144">
    <property type="entry name" value="GTP_EFTU_D2"/>
    <property type="match status" value="1"/>
</dbReference>
<dbReference type="Pfam" id="PF03143">
    <property type="entry name" value="GTP_EFTU_D3"/>
    <property type="match status" value="1"/>
</dbReference>
<dbReference type="PRINTS" id="PR00315">
    <property type="entry name" value="ELONGATNFCT"/>
</dbReference>
<dbReference type="SUPFAM" id="SSF50465">
    <property type="entry name" value="EF-Tu/eEF-1alpha/eIF2-gamma C-terminal domain"/>
    <property type="match status" value="1"/>
</dbReference>
<dbReference type="SUPFAM" id="SSF52540">
    <property type="entry name" value="P-loop containing nucleoside triphosphate hydrolases"/>
    <property type="match status" value="1"/>
</dbReference>
<dbReference type="SUPFAM" id="SSF50447">
    <property type="entry name" value="Translation proteins"/>
    <property type="match status" value="1"/>
</dbReference>
<dbReference type="PROSITE" id="PS00301">
    <property type="entry name" value="G_TR_1"/>
    <property type="match status" value="1"/>
</dbReference>
<dbReference type="PROSITE" id="PS51722">
    <property type="entry name" value="G_TR_2"/>
    <property type="match status" value="1"/>
</dbReference>
<sequence>MAREKFERNKPHVNIGTIGHVDHGKTTLTAAITNVLAKKGQAEVQNYADIDGAPEERERGITINTAHVEYETDSRHYAHVDCPGHADYVKNMITGAAQMDGAILVCAATDGPMAQTKEHILLAKQVGVPALVVALNKCDMVDDEEIIELVELEIRELLSSYDFPGDDIPVVQVSGLKAIEGEAEWEAKIEELMAAVDASIPEPEREVDKPFLMAIEDVFSITGRGTVATGRIERGIVKVGEEVEVVGIREPRKTTVTGVEMFRKLLDEGMAGDNVGLLLRGIQKEDIERGMVLVKPGSITPHTKFEGQVYVLKKEEGGRHTPFFAGYRPQFYIRTTDVTGQITAFTAEDGSNVEMVMPGDNIQMTGELICPVAMELGMRFAIREGGRTIGAGVVSKIIE</sequence>